<organism>
    <name type="scientific">Pseudomonas aeruginosa (strain ATCC 15692 / DSM 22644 / CIP 104116 / JCM 14847 / LMG 12228 / 1C / PRS 101 / PAO1)</name>
    <dbReference type="NCBI Taxonomy" id="208964"/>
    <lineage>
        <taxon>Bacteria</taxon>
        <taxon>Pseudomonadati</taxon>
        <taxon>Pseudomonadota</taxon>
        <taxon>Gammaproteobacteria</taxon>
        <taxon>Pseudomonadales</taxon>
        <taxon>Pseudomonadaceae</taxon>
        <taxon>Pseudomonas</taxon>
    </lineage>
</organism>
<accession>Q9Z4J7</accession>
<reference key="1">
    <citation type="journal article" date="1998" name="Eur. J. Biochem.">
        <title>Quinoprotein ethanol dehydrogenase of Pseudomonas aeruginosa is a homodimer: sequence of the gene and deduced structural properties of the enzyme.</title>
        <authorList>
            <person name="Diehl A."/>
            <person name="von Wintzingerode F."/>
            <person name="Gorisch H."/>
        </authorList>
    </citation>
    <scope>NUCLEOTIDE SEQUENCE [GENOMIC DNA]</scope>
    <scope>PROTEIN SEQUENCE OF 35-46</scope>
    <scope>SUBCELLULAR LOCATION</scope>
    <scope>SUBUNIT</scope>
    <source>
        <strain>ATCC 17933</strain>
    </source>
</reference>
<reference key="2">
    <citation type="journal article" date="2000" name="Nature">
        <title>Complete genome sequence of Pseudomonas aeruginosa PAO1, an opportunistic pathogen.</title>
        <authorList>
            <person name="Stover C.K."/>
            <person name="Pham X.-Q.T."/>
            <person name="Erwin A.L."/>
            <person name="Mizoguchi S.D."/>
            <person name="Warrener P."/>
            <person name="Hickey M.J."/>
            <person name="Brinkman F.S.L."/>
            <person name="Hufnagle W.O."/>
            <person name="Kowalik D.J."/>
            <person name="Lagrou M."/>
            <person name="Garber R.L."/>
            <person name="Goltry L."/>
            <person name="Tolentino E."/>
            <person name="Westbrock-Wadman S."/>
            <person name="Yuan Y."/>
            <person name="Brody L.L."/>
            <person name="Coulter S.N."/>
            <person name="Folger K.R."/>
            <person name="Kas A."/>
            <person name="Larbig K."/>
            <person name="Lim R.M."/>
            <person name="Smith K.A."/>
            <person name="Spencer D.H."/>
            <person name="Wong G.K.-S."/>
            <person name="Wu Z."/>
            <person name="Paulsen I.T."/>
            <person name="Reizer J."/>
            <person name="Saier M.H. Jr."/>
            <person name="Hancock R.E.W."/>
            <person name="Lory S."/>
            <person name="Olson M.V."/>
        </authorList>
    </citation>
    <scope>NUCLEOTIDE SEQUENCE [LARGE SCALE GENOMIC DNA]</scope>
    <source>
        <strain>ATCC 15692 / DSM 22644 / CIP 104116 / JCM 14847 / LMG 12228 / 1C / PRS 101 / PAO1</strain>
    </source>
</reference>
<reference key="3">
    <citation type="journal article" date="1999" name="Microbiology">
        <title>Cytochrome c550 is an essential component of the quinoprotein ethanol oxidation system in Pseudomonas aeruginosa: cloning and sequencing of the genes encoding cytochrome c550 and an adjacent acetaldehyde dehydrogenase.</title>
        <authorList>
            <person name="Schobert M."/>
            <person name="Goerisch H."/>
        </authorList>
    </citation>
    <scope>NUCLEOTIDE SEQUENCE [GENOMIC DNA] OF 1-52</scope>
    <scope>PATHWAY</scope>
    <source>
        <strain>ATCC 17933</strain>
    </source>
</reference>
<reference key="4">
    <citation type="journal article" date="1988" name="Biol. Chem. Hoppe-Seyler">
        <title>Purification, crystallisation and characterization of quinoprotein ethanol dehydrogenase from Pseudomonas aeruginosa.</title>
        <authorList>
            <person name="Rupp M."/>
            <person name="Goerisch H."/>
        </authorList>
    </citation>
    <scope>FUNCTION</scope>
    <scope>CATALYTIC ACTIVITY</scope>
    <scope>BIOPHYSICOCHEMICAL PROPERTIES</scope>
    <scope>COFACTOR</scope>
    <scope>ACTIVITY REGULATION</scope>
    <scope>SUBUNIT</scope>
    <scope>SUBSTRATE SPECIFICITY</scope>
    <scope>INDUCTION</scope>
    <source>
        <strain>ATCC 17933</strain>
    </source>
</reference>
<reference key="5">
    <citation type="journal article" date="1993" name="Biochem. J.">
        <title>Cytochrome c550 from Pseudomonas aeruginosa.</title>
        <authorList>
            <person name="Reichmann P."/>
            <person name="Goerisch H."/>
        </authorList>
    </citation>
    <scope>FUNCTION</scope>
    <scope>CATALYTIC ACTIVITY</scope>
    <scope>ACTIVITY REGULATION</scope>
    <scope>BIOPHYSICOCHEMICAL PROPERTIES</scope>
    <source>
        <strain>ATCC 17933</strain>
    </source>
</reference>
<reference key="6">
    <citation type="journal article" date="2004" name="FEBS Lett.">
        <title>Characterisation of the PQQ cofactor radical in quinoprotein ethanol dehydrogenase of Pseudomonas aeruginosa by electron paramagnetic resonance spectroscopy.</title>
        <authorList>
            <person name="Kay C.W."/>
            <person name="Mennenga B."/>
            <person name="Goerisch H."/>
            <person name="Bittl R."/>
        </authorList>
    </citation>
    <scope>COFACTOR</scope>
    <scope>MUTAGENESIS OF 139-CYS-CYS-140</scope>
    <source>
        <strain>ATCC 17933</strain>
    </source>
</reference>
<reference key="7">
    <citation type="journal article" date="2009" name="Arch. Microbiol.">
        <title>Quinoprotein ethanol dehydrogenase from Pseudomonas aeruginosa: the unusual disulfide ring formed by adjacent cysteine residues is essential for efficient electron transfer to cytochrome c550.</title>
        <authorList>
            <person name="Mennenga B."/>
            <person name="Kay C.W."/>
            <person name="Goerisch H."/>
        </authorList>
    </citation>
    <scope>FUNCTION</scope>
    <scope>CATALYTIC ACTIVITY</scope>
    <scope>COFACTOR</scope>
    <scope>BIOPHYSICOCHEMICAL PROPERTIES</scope>
    <scope>MUTAGENESIS OF 139-CYS-CYS-140</scope>
    <scope>INTERACTION WITH CYTOCHROME C550</scope>
    <source>
        <strain>ATCC 17933</strain>
    </source>
</reference>
<reference key="8">
    <citation type="journal article" date="2000" name="J. Mol. Biol.">
        <title>X-ray structure of the quinoprotein ethanol dehydrogenase from Pseudomonas aeruginosa: basis of substrate specificity.</title>
        <authorList>
            <person name="Keitel T."/>
            <person name="Diehl A."/>
            <person name="Knaute T."/>
            <person name="Stezowski J.J."/>
            <person name="Hoehne W."/>
            <person name="Goerisch H."/>
        </authorList>
    </citation>
    <scope>X-RAY CRYSTALLOGRAPHY (2.6 ANGSTROMS) OF 35-616 IN COMPLEX WITH CALCIUM IONS AND PYRROLOQUINOLINE QUINONE</scope>
    <scope>COFACTOR</scope>
    <scope>SUBUNIT</scope>
    <scope>DISULFIDE BOND</scope>
    <source>
        <strain>ATCC 17933</strain>
    </source>
</reference>
<name>QEDH_PSEAE</name>
<comment type="function">
    <text evidence="4 5 6">Catalyzes the oxidation of ethanol and other primary alcohols to the corresponding aldehydes, except methanol, which is a very poor substrate. Uses a specific inducible cytochrome c550, encoded by the adjacent gene in the locus, as electron acceptor. Is a key enzyme of the carbon and energy metabolism during growth of P.aeruginosa on ethanol as the sole carbon and energy source. Is also able to use secondary alcohols as well as aminoalcohols like ethanolamine and 1-amino-2-propanol, and aldehydes as substrates.</text>
</comment>
<comment type="catalytic activity">
    <reaction evidence="4 6 16">
        <text>a primary alcohol + 2 Fe(III)-[cytochrome c] = an aldehyde + 2 Fe(II)-[cytochrome c] + 2 H(+)</text>
        <dbReference type="Rhea" id="RHEA:51020"/>
        <dbReference type="Rhea" id="RHEA-COMP:10350"/>
        <dbReference type="Rhea" id="RHEA-COMP:14399"/>
        <dbReference type="ChEBI" id="CHEBI:15378"/>
        <dbReference type="ChEBI" id="CHEBI:15734"/>
        <dbReference type="ChEBI" id="CHEBI:17478"/>
        <dbReference type="ChEBI" id="CHEBI:29033"/>
        <dbReference type="ChEBI" id="CHEBI:29034"/>
        <dbReference type="EC" id="1.1.2.8"/>
    </reaction>
    <physiologicalReaction direction="left-to-right" evidence="17">
        <dbReference type="Rhea" id="RHEA:51021"/>
    </physiologicalReaction>
</comment>
<comment type="catalytic activity">
    <reaction evidence="6 15 16">
        <text>ethanol + 2 Fe(III)-[cytochrome c] = acetaldehyde + 2 Fe(II)-[cytochrome c] + 2 H(+)</text>
        <dbReference type="Rhea" id="RHEA:62200"/>
        <dbReference type="Rhea" id="RHEA-COMP:10350"/>
        <dbReference type="Rhea" id="RHEA-COMP:14399"/>
        <dbReference type="ChEBI" id="CHEBI:15343"/>
        <dbReference type="ChEBI" id="CHEBI:15378"/>
        <dbReference type="ChEBI" id="CHEBI:16236"/>
        <dbReference type="ChEBI" id="CHEBI:29033"/>
        <dbReference type="ChEBI" id="CHEBI:29034"/>
    </reaction>
    <physiologicalReaction direction="left-to-right" evidence="17">
        <dbReference type="Rhea" id="RHEA:62201"/>
    </physiologicalReaction>
</comment>
<comment type="catalytic activity">
    <reaction evidence="15 16">
        <text>butan-1-ol + 2 Fe(III)-[cytochrome c] = butanal + 2 Fe(II)-[cytochrome c] + 2 H(+)</text>
        <dbReference type="Rhea" id="RHEA:43432"/>
        <dbReference type="Rhea" id="RHEA-COMP:10350"/>
        <dbReference type="Rhea" id="RHEA-COMP:14399"/>
        <dbReference type="ChEBI" id="CHEBI:15378"/>
        <dbReference type="ChEBI" id="CHEBI:15743"/>
        <dbReference type="ChEBI" id="CHEBI:28885"/>
        <dbReference type="ChEBI" id="CHEBI:29033"/>
        <dbReference type="ChEBI" id="CHEBI:29034"/>
    </reaction>
</comment>
<comment type="catalytic activity">
    <reaction evidence="4">
        <text>propan-2-ol + 2 Fe(III)-[cytochrome c] = acetone + 2 Fe(II)-[cytochrome c] + 2 H(+)</text>
        <dbReference type="Rhea" id="RHEA:62196"/>
        <dbReference type="Rhea" id="RHEA-COMP:10350"/>
        <dbReference type="Rhea" id="RHEA-COMP:14399"/>
        <dbReference type="ChEBI" id="CHEBI:15347"/>
        <dbReference type="ChEBI" id="CHEBI:15378"/>
        <dbReference type="ChEBI" id="CHEBI:17824"/>
        <dbReference type="ChEBI" id="CHEBI:29033"/>
        <dbReference type="ChEBI" id="CHEBI:29034"/>
    </reaction>
</comment>
<comment type="catalytic activity">
    <reaction evidence="15">
        <text>1-propanol + 2 Fe(III)-[cytochrome c] = propanal + 2 Fe(II)-[cytochrome c] + 2 H(+)</text>
        <dbReference type="Rhea" id="RHEA:62204"/>
        <dbReference type="Rhea" id="RHEA-COMP:10350"/>
        <dbReference type="Rhea" id="RHEA-COMP:14399"/>
        <dbReference type="ChEBI" id="CHEBI:15378"/>
        <dbReference type="ChEBI" id="CHEBI:17153"/>
        <dbReference type="ChEBI" id="CHEBI:28831"/>
        <dbReference type="ChEBI" id="CHEBI:29033"/>
        <dbReference type="ChEBI" id="CHEBI:29034"/>
    </reaction>
</comment>
<comment type="cofactor">
    <cofactor evidence="2 3 4 5">
        <name>pyrroloquinoline quinone</name>
        <dbReference type="ChEBI" id="CHEBI:58442"/>
    </cofactor>
    <text evidence="2 5">Binds 1 PQQ group non-covalently per subunit (PubMed:10736230, PubMed:3144289). PQQ is embedded between the ring structure formed from a disulfide bridge between adjacent cysteines Cys-139 and Cys-140 and the indole ring of Trp-282 (PubMed:10736230).</text>
</comment>
<comment type="cofactor">
    <cofactor evidence="2 4 16">
        <name>Ca(2+)</name>
        <dbReference type="ChEBI" id="CHEBI:29108"/>
    </cofactor>
    <text evidence="2">Binds 2 calcium ions per subunit. One is located in the active-site cavity near PQQ and the second calcium binds at the N-terminus and contributes to the stability of the native enzyme.</text>
</comment>
<comment type="activity regulation">
    <text evidence="5 6">Inhibited by cyclopropanone ethylhemiketal. Activated by ammonia (500mM), methylamine (5mM), ethylamine (5mM), octylamine (5mM), ethanolamine (5mM) and 1-amino-2-propanol (5mM), in assays using artificial electron acceptors (PubMed:3144289). Ammonia is not needed for, nor does it stimulate, the ethanol-oxidizing activity when using the natural electron acceptor cytochrome c550 (PubMed:8380982).</text>
</comment>
<comment type="biophysicochemical properties">
    <kinetics>
        <KM evidence="5">14 uM for ethanol</KM>
        <KM evidence="5">21 uM for 1-propanol</KM>
        <KM evidence="5">680 uM for 2-propanol</KM>
        <KM evidence="5">980 uM for (2S)-2-butanol</KM>
        <KM evidence="5">4.5 mM for ethanal</KM>
        <KM evidence="5">94 mM for methanol</KM>
        <KM evidence="4">12 uM for ethanol (at pH 9)</KM>
        <KM evidence="4">62 uM for 1-propanol (at pH 9)</KM>
        <KM evidence="4">1.4 mM for 2-propanol (at pH 9)</KM>
        <KM evidence="4">21 mM for 1,3-propanediol (at pH 9)</KM>
        <KM evidence="4">0.43 mM for 1-butanol (at pH 9)</KM>
        <text evidence="4">kcat is 11 sec(-1) for the oxidation of ethanol using artificial electron acceptor (at pH 9). kcat is 15 sec(-1) for the oxidation of 1-propanol using artificial electron acceptor (at pH 9). kcat is 11 sec(-1) for the oxidation of 2-propanol using artificial electron acceptor (at pH 9). kcat is 40 sec(-1) for the oxidation of 1,3-propanediol using artificial electron acceptor (at pH 9). kcat is 42 sec(-1) for the oxidation of 1-butanol using artificial electron acceptor (at pH 9). kcat is 2.4 sec(-1) for the oxidation of 2-propanol using natural electron acceptor cytochrome c550 (at pH 7).</text>
    </kinetics>
    <phDependence>
        <text evidence="5 6">Optimum pH is 9 in assays using artificial electron acceptors (PubMed:3144289). However, in a system with homogenous QEDH, cytochrome c550 and a membrane fraction of P.aeruginosa, electron transport from ethanol to O(2) is observed at the more physiological conditions of pH 7, and the system is inactive at pH 9 (PubMed:8380982).</text>
    </phDependence>
</comment>
<comment type="pathway">
    <text evidence="13">Alcohol metabolism; ethanol degradation; acetate from ethanol: step 1/2.</text>
</comment>
<comment type="subunit">
    <text evidence="2 4 5 7">Homodimer. Interacts with cytochrome c550 (PubMed:19224199).</text>
</comment>
<comment type="subcellular location">
    <subcellularLocation>
        <location evidence="18">Periplasm</location>
    </subcellularLocation>
</comment>
<comment type="induction">
    <text evidence="5">Induced by growth on ethanol.</text>
</comment>
<comment type="PTM">
    <text evidence="4">The disulfide ring formed between the two adjacent cysteine residues Cys-139 and Cys-140 is essential for efficient electron transfer at pH 7 from QEDH to its natural electron acceptor cytochrome c550.</text>
</comment>
<comment type="similarity">
    <text evidence="12">Belongs to the bacterial PQQ dehydrogenase family.</text>
</comment>
<gene>
    <name evidence="8" type="primary">exaA</name>
    <name type="ordered locus">PA1982</name>
</gene>
<keyword id="KW-0002">3D-structure</keyword>
<keyword id="KW-0106">Calcium</keyword>
<keyword id="KW-0903">Direct protein sequencing</keyword>
<keyword id="KW-1015">Disulfide bond</keyword>
<keyword id="KW-0479">Metal-binding</keyword>
<keyword id="KW-0560">Oxidoreductase</keyword>
<keyword id="KW-0574">Periplasm</keyword>
<keyword id="KW-0634">PQQ</keyword>
<keyword id="KW-1185">Reference proteome</keyword>
<keyword id="KW-0732">Signal</keyword>
<evidence type="ECO:0000256" key="1">
    <source>
        <dbReference type="SAM" id="MobiDB-lite"/>
    </source>
</evidence>
<evidence type="ECO:0000269" key="2">
    <source>
    </source>
</evidence>
<evidence type="ECO:0000269" key="3">
    <source>
    </source>
</evidence>
<evidence type="ECO:0000269" key="4">
    <source>
    </source>
</evidence>
<evidence type="ECO:0000269" key="5">
    <source>
    </source>
</evidence>
<evidence type="ECO:0000269" key="6">
    <source>
    </source>
</evidence>
<evidence type="ECO:0000269" key="7">
    <source>
    </source>
</evidence>
<evidence type="ECO:0000303" key="8">
    <source>
    </source>
</evidence>
<evidence type="ECO:0000303" key="9">
    <source>
    </source>
</evidence>
<evidence type="ECO:0000303" key="10">
    <source>
    </source>
</evidence>
<evidence type="ECO:0000303" key="11">
    <source>
    </source>
</evidence>
<evidence type="ECO:0000305" key="12"/>
<evidence type="ECO:0000305" key="13">
    <source>
    </source>
</evidence>
<evidence type="ECO:0000305" key="14">
    <source>
    </source>
</evidence>
<evidence type="ECO:0000305" key="15">
    <source>
    </source>
</evidence>
<evidence type="ECO:0000305" key="16">
    <source>
    </source>
</evidence>
<evidence type="ECO:0000305" key="17">
    <source>
    </source>
</evidence>
<evidence type="ECO:0000305" key="18">
    <source>
    </source>
</evidence>
<evidence type="ECO:0007744" key="19">
    <source>
        <dbReference type="PDB" id="1FLG"/>
    </source>
</evidence>
<evidence type="ECO:0007829" key="20">
    <source>
        <dbReference type="PDB" id="1FLG"/>
    </source>
</evidence>
<protein>
    <recommendedName>
        <fullName evidence="9 10 11">Quinoprotein ethanol dehydrogenase</fullName>
        <shortName evidence="9 11">QEDH</shortName>
        <ecNumber evidence="4 6 16">1.1.2.8</ecNumber>
    </recommendedName>
    <alternativeName>
        <fullName evidence="12">Quinoprotein alcohol dehydrogenase (cytochrome c)</fullName>
    </alternativeName>
    <alternativeName>
        <fullName evidence="12">Quinoprotein alcohol dehydrogenase (cytochrome c550)</fullName>
    </alternativeName>
</protein>
<dbReference type="EC" id="1.1.2.8" evidence="4 6 16"/>
<dbReference type="EMBL" id="AJ009858">
    <property type="protein sequence ID" value="CAA08896.1"/>
    <property type="molecule type" value="Genomic_DNA"/>
</dbReference>
<dbReference type="EMBL" id="AE004091">
    <property type="protein sequence ID" value="AAG05370.1"/>
    <property type="molecule type" value="Genomic_DNA"/>
</dbReference>
<dbReference type="EMBL" id="AF068264">
    <property type="protein sequence ID" value="AAC79657.1"/>
    <property type="molecule type" value="Genomic_DNA"/>
</dbReference>
<dbReference type="PIR" id="B83399">
    <property type="entry name" value="B83399"/>
</dbReference>
<dbReference type="RefSeq" id="NP_250672.1">
    <property type="nucleotide sequence ID" value="NC_002516.2"/>
</dbReference>
<dbReference type="RefSeq" id="WP_003088524.1">
    <property type="nucleotide sequence ID" value="NZ_QZGE01000030.1"/>
</dbReference>
<dbReference type="PDB" id="1FLG">
    <property type="method" value="X-ray"/>
    <property type="resolution" value="2.60 A"/>
    <property type="chains" value="A/B=35-616"/>
</dbReference>
<dbReference type="PDBsum" id="1FLG"/>
<dbReference type="SMR" id="Q9Z4J7"/>
<dbReference type="STRING" id="208964.PA1982"/>
<dbReference type="DrugBank" id="DB03205">
    <property type="generic name" value="Pyrroloquinoline Quinone"/>
</dbReference>
<dbReference type="PaxDb" id="208964-PA1982"/>
<dbReference type="GeneID" id="880475"/>
<dbReference type="KEGG" id="pae:PA1982"/>
<dbReference type="PATRIC" id="fig|208964.12.peg.2066"/>
<dbReference type="PseudoCAP" id="PA1982"/>
<dbReference type="HOGENOM" id="CLU_018478_0_0_6"/>
<dbReference type="InParanoid" id="Q9Z4J7"/>
<dbReference type="OrthoDB" id="9794322at2"/>
<dbReference type="PhylomeDB" id="Q9Z4J7"/>
<dbReference type="BioCyc" id="MetaCyc:MONOMER-15517"/>
<dbReference type="BioCyc" id="PAER208964:G1FZ6-2020-MONOMER"/>
<dbReference type="BRENDA" id="1.1.2.8">
    <property type="organism ID" value="5087"/>
</dbReference>
<dbReference type="BRENDA" id="1.1.2.B3">
    <property type="organism ID" value="5087"/>
</dbReference>
<dbReference type="UniPathway" id="UPA00780">
    <property type="reaction ID" value="UER00767"/>
</dbReference>
<dbReference type="EvolutionaryTrace" id="Q9Z4J7"/>
<dbReference type="Proteomes" id="UP000002438">
    <property type="component" value="Chromosome"/>
</dbReference>
<dbReference type="GO" id="GO:0016020">
    <property type="term" value="C:membrane"/>
    <property type="evidence" value="ECO:0007669"/>
    <property type="project" value="InterPro"/>
</dbReference>
<dbReference type="GO" id="GO:0030288">
    <property type="term" value="C:outer membrane-bounded periplasmic space"/>
    <property type="evidence" value="ECO:0007669"/>
    <property type="project" value="InterPro"/>
</dbReference>
<dbReference type="GO" id="GO:0052934">
    <property type="term" value="F:alcohol dehydrogenase (cytochrome c) activity"/>
    <property type="evidence" value="ECO:0007669"/>
    <property type="project" value="UniProtKB-EC"/>
</dbReference>
<dbReference type="GO" id="GO:0005509">
    <property type="term" value="F:calcium ion binding"/>
    <property type="evidence" value="ECO:0007669"/>
    <property type="project" value="InterPro"/>
</dbReference>
<dbReference type="GO" id="GO:0006068">
    <property type="term" value="P:ethanol catabolic process"/>
    <property type="evidence" value="ECO:0007669"/>
    <property type="project" value="UniProtKB-UniPathway"/>
</dbReference>
<dbReference type="CDD" id="cd10277">
    <property type="entry name" value="PQQ_ADH_I"/>
    <property type="match status" value="1"/>
</dbReference>
<dbReference type="FunFam" id="2.140.10.10:FF:000003">
    <property type="entry name" value="Methanol dehydrogenase, large subunit"/>
    <property type="match status" value="1"/>
</dbReference>
<dbReference type="Gene3D" id="2.140.10.10">
    <property type="entry name" value="Quinoprotein alcohol dehydrogenase-like superfamily"/>
    <property type="match status" value="1"/>
</dbReference>
<dbReference type="InterPro" id="IPR034119">
    <property type="entry name" value="ADHI"/>
</dbReference>
<dbReference type="InterPro" id="IPR018391">
    <property type="entry name" value="PQQ_b-propeller_rpt"/>
</dbReference>
<dbReference type="InterPro" id="IPR017512">
    <property type="entry name" value="PQQ_MeOH/EtOH_DH"/>
</dbReference>
<dbReference type="InterPro" id="IPR002372">
    <property type="entry name" value="PQQ_rpt_dom"/>
</dbReference>
<dbReference type="InterPro" id="IPR011047">
    <property type="entry name" value="Quinoprotein_ADH-like_sf"/>
</dbReference>
<dbReference type="InterPro" id="IPR001479">
    <property type="entry name" value="Quinoprotein_DH_CS"/>
</dbReference>
<dbReference type="NCBIfam" id="TIGR03075">
    <property type="entry name" value="PQQ_enz_alc_DH"/>
    <property type="match status" value="1"/>
</dbReference>
<dbReference type="PANTHER" id="PTHR32303">
    <property type="entry name" value="QUINOPROTEIN ALCOHOL DEHYDROGENASE (CYTOCHROME C)"/>
    <property type="match status" value="1"/>
</dbReference>
<dbReference type="PANTHER" id="PTHR32303:SF20">
    <property type="entry name" value="QUINOPROTEIN ETHANOL DEHYDROGENASE"/>
    <property type="match status" value="1"/>
</dbReference>
<dbReference type="Pfam" id="PF01011">
    <property type="entry name" value="PQQ"/>
    <property type="match status" value="2"/>
</dbReference>
<dbReference type="SMART" id="SM00564">
    <property type="entry name" value="PQQ"/>
    <property type="match status" value="6"/>
</dbReference>
<dbReference type="SUPFAM" id="SSF50998">
    <property type="entry name" value="Quinoprotein alcohol dehydrogenase-like"/>
    <property type="match status" value="1"/>
</dbReference>
<dbReference type="PROSITE" id="PS00363">
    <property type="entry name" value="BACTERIAL_PQQ_1"/>
    <property type="match status" value="1"/>
</dbReference>
<dbReference type="PROSITE" id="PS00364">
    <property type="entry name" value="BACTERIAL_PQQ_2"/>
    <property type="match status" value="1"/>
</dbReference>
<sequence length="623" mass="68123">MTTRTSPAPAGLLRPSLHCLAFAVALGSAGAALAKDVTWEDIANDDKTTGDVLQYGMGTHAQRWSPLKQVNADNVFKLTPAWSYSFGDEKQRGQESQAIVSDGVIYVTASYSRLFALDAKTGKRLWTYNHRLPDDIRPCCDVVNRGAAIYGDKVFFGTLDASVVALNKNTGKVVWKKKFADHGAGYTMTGAPTIVKDGKTGKVLLIHGSSGDEFGVVGRLFARDPDTGEEIWMRPFVEGHMGRLNGKDSTVTGDVKAPSWPDDRNSPTGKVESWSHGGGAPWQSASFDAETNTIIVGAGNPGPWNTWARTAKGGNPHDYDSLYTSGQVGVDPSSGEVKWFYQHTPNDAWDFSGNNELVLFDYKAKDGKIVKATAHADRNGFFYVVDRSNGKLQNAFPFVDNITWASHIDLKTGRPVEREGQRPPLPEPGQKHGKAVEVSPPFLGGKNWNPMAYSQDTGLFYVPANHWKEDYWTEEVSYTKGSAYLGMGFRIKRMYDDHVGSLRAMDPVSGKVVWEHKEHLPLWAGVLATAGNLVFTGTGDGYFKAFDAKSGKELWKFQTGSGIVSPPITWEQDGEQYLGVTVGYGGAVPLWGGDMADLTRPVAQGGSFWVFKLPSWDNRTASR</sequence>
<proteinExistence type="evidence at protein level"/>
<feature type="signal peptide" evidence="7 16">
    <location>
        <begin position="1"/>
        <end position="34"/>
    </location>
</feature>
<feature type="chain" id="PRO_0000025565" description="Quinoprotein ethanol dehydrogenase">
    <location>
        <begin position="35"/>
        <end position="623"/>
    </location>
</feature>
<feature type="region of interest" description="Disordered" evidence="1">
    <location>
        <begin position="244"/>
        <end position="281"/>
    </location>
</feature>
<feature type="region of interest" description="Disordered" evidence="1">
    <location>
        <begin position="413"/>
        <end position="434"/>
    </location>
</feature>
<feature type="active site" description="Proton acceptor" evidence="14">
    <location>
        <position position="350"/>
    </location>
</feature>
<feature type="binding site" evidence="2 19">
    <location>
        <position position="45"/>
    </location>
    <ligand>
        <name>Ca(2+)</name>
        <dbReference type="ChEBI" id="CHEBI:29108"/>
        <label>1</label>
    </ligand>
</feature>
<feature type="binding site" evidence="2 19">
    <location>
        <position position="48"/>
    </location>
    <ligand>
        <name>Ca(2+)</name>
        <dbReference type="ChEBI" id="CHEBI:29108"/>
        <label>1</label>
    </ligand>
</feature>
<feature type="binding site" evidence="2 19">
    <location>
        <position position="51"/>
    </location>
    <ligand>
        <name>Ca(2+)</name>
        <dbReference type="ChEBI" id="CHEBI:29108"/>
        <label>1</label>
    </ligand>
</feature>
<feature type="binding site" evidence="2 19">
    <location>
        <position position="95"/>
    </location>
    <ligand>
        <name>pyrroloquinoline quinone</name>
        <dbReference type="ChEBI" id="CHEBI:58442"/>
    </ligand>
</feature>
<feature type="binding site" evidence="2 19">
    <location>
        <position position="145"/>
    </location>
    <ligand>
        <name>pyrroloquinoline quinone</name>
        <dbReference type="ChEBI" id="CHEBI:58442"/>
    </ligand>
</feature>
<feature type="binding site" evidence="2 19">
    <location>
        <position position="189"/>
    </location>
    <ligand>
        <name>pyrroloquinoline quinone</name>
        <dbReference type="ChEBI" id="CHEBI:58442"/>
    </ligand>
</feature>
<feature type="binding site" evidence="2 19">
    <location>
        <begin position="207"/>
        <end position="209"/>
    </location>
    <ligand>
        <name>pyrroloquinoline quinone</name>
        <dbReference type="ChEBI" id="CHEBI:58442"/>
    </ligand>
</feature>
<feature type="binding site" evidence="2 19">
    <location>
        <position position="213"/>
    </location>
    <ligand>
        <name>Ca(2+)</name>
        <dbReference type="ChEBI" id="CHEBI:29108"/>
        <label>2</label>
        <note>catalytic</note>
    </ligand>
</feature>
<feature type="binding site" evidence="2 19">
    <location>
        <position position="300"/>
    </location>
    <ligand>
        <name>Ca(2+)</name>
        <dbReference type="ChEBI" id="CHEBI:29108"/>
        <label>2</label>
        <note>catalytic</note>
    </ligand>
</feature>
<feature type="binding site" evidence="2 19">
    <location>
        <position position="350"/>
    </location>
    <ligand>
        <name>Ca(2+)</name>
        <dbReference type="ChEBI" id="CHEBI:29108"/>
        <label>2</label>
        <note>catalytic</note>
    </ligand>
</feature>
<feature type="binding site" evidence="2 19">
    <location>
        <position position="378"/>
    </location>
    <ligand>
        <name>pyrroloquinoline quinone</name>
        <dbReference type="ChEBI" id="CHEBI:58442"/>
    </ligand>
</feature>
<feature type="binding site" evidence="2 19">
    <location>
        <position position="523"/>
    </location>
    <ligand>
        <name>pyrroloquinoline quinone</name>
        <dbReference type="ChEBI" id="CHEBI:58442"/>
    </ligand>
</feature>
<feature type="binding site" evidence="2 19">
    <location>
        <position position="587"/>
    </location>
    <ligand>
        <name>pyrroloquinoline quinone</name>
        <dbReference type="ChEBI" id="CHEBI:58442"/>
    </ligand>
</feature>
<feature type="disulfide bond" evidence="2 19">
    <location>
        <begin position="139"/>
        <end position="140"/>
    </location>
</feature>
<feature type="mutagenesis site" description="15-fold decrease in catalytic activity with the natural electron acceptor cytochrome c550. Does not affect, or even increases, catalytic activity with artificial electron acceptors. Shows high decreased affinity for primary alcohols, while the affinity for the secondary alcohol 2-propanol is unaltered." evidence="3 4">
    <original>CC</original>
    <variation>AA</variation>
    <location>
        <begin position="139"/>
        <end position="140"/>
    </location>
</feature>
<feature type="helix" evidence="20">
    <location>
        <begin position="39"/>
        <end position="43"/>
    </location>
</feature>
<feature type="helix" evidence="20">
    <location>
        <begin position="45"/>
        <end position="47"/>
    </location>
</feature>
<feature type="turn" evidence="20">
    <location>
        <begin position="72"/>
        <end position="74"/>
    </location>
</feature>
<feature type="helix" evidence="20">
    <location>
        <begin position="75"/>
        <end position="77"/>
    </location>
</feature>
<feature type="strand" evidence="20">
    <location>
        <begin position="79"/>
        <end position="85"/>
    </location>
</feature>
<feature type="strand" evidence="20">
    <location>
        <begin position="99"/>
        <end position="101"/>
    </location>
</feature>
<feature type="strand" evidence="20">
    <location>
        <begin position="104"/>
        <end position="109"/>
    </location>
</feature>
<feature type="turn" evidence="20">
    <location>
        <begin position="110"/>
        <end position="112"/>
    </location>
</feature>
<feature type="strand" evidence="20">
    <location>
        <begin position="113"/>
        <end position="121"/>
    </location>
</feature>
<feature type="strand" evidence="20">
    <location>
        <begin position="124"/>
        <end position="129"/>
    </location>
</feature>
<feature type="strand" evidence="20">
    <location>
        <begin position="148"/>
        <end position="150"/>
    </location>
</feature>
<feature type="strand" evidence="20">
    <location>
        <begin position="153"/>
        <end position="158"/>
    </location>
</feature>
<feature type="turn" evidence="20">
    <location>
        <begin position="159"/>
        <end position="161"/>
    </location>
</feature>
<feature type="strand" evidence="20">
    <location>
        <begin position="162"/>
        <end position="170"/>
    </location>
</feature>
<feature type="strand" evidence="20">
    <location>
        <begin position="173"/>
        <end position="178"/>
    </location>
</feature>
<feature type="helix" evidence="20">
    <location>
        <begin position="182"/>
        <end position="184"/>
    </location>
</feature>
<feature type="strand" evidence="20">
    <location>
        <begin position="193"/>
        <end position="196"/>
    </location>
</feature>
<feature type="turn" evidence="20">
    <location>
        <begin position="198"/>
        <end position="200"/>
    </location>
</feature>
<feature type="strand" evidence="20">
    <location>
        <begin position="203"/>
        <end position="207"/>
    </location>
</feature>
<feature type="helix" evidence="20">
    <location>
        <begin position="212"/>
        <end position="214"/>
    </location>
</feature>
<feature type="strand" evidence="20">
    <location>
        <begin position="219"/>
        <end position="223"/>
    </location>
</feature>
<feature type="turn" evidence="20">
    <location>
        <begin position="225"/>
        <end position="227"/>
    </location>
</feature>
<feature type="strand" evidence="20">
    <location>
        <begin position="230"/>
        <end position="237"/>
    </location>
</feature>
<feature type="strand" evidence="20">
    <location>
        <begin position="241"/>
        <end position="244"/>
    </location>
</feature>
<feature type="strand" evidence="20">
    <location>
        <begin position="247"/>
        <end position="253"/>
    </location>
</feature>
<feature type="helix" evidence="20">
    <location>
        <begin position="272"/>
        <end position="276"/>
    </location>
</feature>
<feature type="strand" evidence="20">
    <location>
        <begin position="286"/>
        <end position="288"/>
    </location>
</feature>
<feature type="turn" evidence="20">
    <location>
        <begin position="289"/>
        <end position="292"/>
    </location>
</feature>
<feature type="strand" evidence="20">
    <location>
        <begin position="293"/>
        <end position="298"/>
    </location>
</feature>
<feature type="strand" evidence="20">
    <location>
        <begin position="301"/>
        <end position="304"/>
    </location>
</feature>
<feature type="helix" evidence="20">
    <location>
        <begin position="306"/>
        <end position="309"/>
    </location>
</feature>
<feature type="strand" evidence="20">
    <location>
        <begin position="325"/>
        <end position="330"/>
    </location>
</feature>
<feature type="turn" evidence="20">
    <location>
        <begin position="332"/>
        <end position="334"/>
    </location>
</feature>
<feature type="strand" evidence="20">
    <location>
        <begin position="337"/>
        <end position="344"/>
    </location>
</feature>
<feature type="strand" evidence="20">
    <location>
        <begin position="358"/>
        <end position="363"/>
    </location>
</feature>
<feature type="strand" evidence="20">
    <location>
        <begin position="365"/>
        <end position="367"/>
    </location>
</feature>
<feature type="strand" evidence="20">
    <location>
        <begin position="369"/>
        <end position="376"/>
    </location>
</feature>
<feature type="strand" evidence="20">
    <location>
        <begin position="380"/>
        <end position="386"/>
    </location>
</feature>
<feature type="turn" evidence="20">
    <location>
        <begin position="387"/>
        <end position="389"/>
    </location>
</feature>
<feature type="strand" evidence="20">
    <location>
        <begin position="392"/>
        <end position="400"/>
    </location>
</feature>
<feature type="strand" evidence="20">
    <location>
        <begin position="404"/>
        <end position="408"/>
    </location>
</feature>
<feature type="turn" evidence="20">
    <location>
        <begin position="410"/>
        <end position="412"/>
    </location>
</feature>
<feature type="strand" evidence="20">
    <location>
        <begin position="415"/>
        <end position="417"/>
    </location>
</feature>
<feature type="strand" evidence="20">
    <location>
        <begin position="436"/>
        <end position="440"/>
    </location>
</feature>
<feature type="turn" evidence="20">
    <location>
        <begin position="455"/>
        <end position="457"/>
    </location>
</feature>
<feature type="strand" evidence="20">
    <location>
        <begin position="460"/>
        <end position="465"/>
    </location>
</feature>
<feature type="strand" evidence="20">
    <location>
        <begin position="467"/>
        <end position="473"/>
    </location>
</feature>
<feature type="strand" evidence="20">
    <location>
        <begin position="487"/>
        <end position="494"/>
    </location>
</feature>
<feature type="strand" evidence="20">
    <location>
        <begin position="499"/>
        <end position="505"/>
    </location>
</feature>
<feature type="turn" evidence="20">
    <location>
        <begin position="507"/>
        <end position="509"/>
    </location>
</feature>
<feature type="strand" evidence="20">
    <location>
        <begin position="512"/>
        <end position="520"/>
    </location>
</feature>
<feature type="strand" evidence="20">
    <location>
        <begin position="527"/>
        <end position="529"/>
    </location>
</feature>
<feature type="turn" evidence="20">
    <location>
        <begin position="530"/>
        <end position="532"/>
    </location>
</feature>
<feature type="strand" evidence="20">
    <location>
        <begin position="533"/>
        <end position="537"/>
    </location>
</feature>
<feature type="strand" evidence="20">
    <location>
        <begin position="541"/>
        <end position="547"/>
    </location>
</feature>
<feature type="turn" evidence="20">
    <location>
        <begin position="548"/>
        <end position="550"/>
    </location>
</feature>
<feature type="strand" evidence="20">
    <location>
        <begin position="553"/>
        <end position="558"/>
    </location>
</feature>
<feature type="strand" evidence="20">
    <location>
        <begin position="568"/>
        <end position="572"/>
    </location>
</feature>
<feature type="strand" evidence="20">
    <location>
        <begin position="575"/>
        <end position="582"/>
    </location>
</feature>
<feature type="helix" evidence="20">
    <location>
        <begin position="587"/>
        <end position="591"/>
    </location>
</feature>
<feature type="helix" evidence="20">
    <location>
        <begin position="594"/>
        <end position="599"/>
    </location>
</feature>
<feature type="strand" evidence="20">
    <location>
        <begin position="607"/>
        <end position="612"/>
    </location>
</feature>